<reference key="1">
    <citation type="journal article" date="2009" name="Proc. Natl. Acad. Sci. U.S.A.">
        <title>Characterizing a model human gut microbiota composed of members of its two dominant bacterial phyla.</title>
        <authorList>
            <person name="Mahowald M.A."/>
            <person name="Rey F.E."/>
            <person name="Seedorf H."/>
            <person name="Turnbaugh P.J."/>
            <person name="Fulton R.S."/>
            <person name="Wollam A."/>
            <person name="Shah N."/>
            <person name="Wang C."/>
            <person name="Magrini V."/>
            <person name="Wilson R.K."/>
            <person name="Cantarel B.L."/>
            <person name="Coutinho P.M."/>
            <person name="Henrissat B."/>
            <person name="Crock L.W."/>
            <person name="Russell A."/>
            <person name="Verberkmoes N.C."/>
            <person name="Hettich R.L."/>
            <person name="Gordon J.I."/>
        </authorList>
    </citation>
    <scope>NUCLEOTIDE SEQUENCE [LARGE SCALE GENOMIC DNA]</scope>
    <source>
        <strain>ATCC 27750 / DSM 3376 / VPI C15-48 / C15-B4</strain>
    </source>
</reference>
<evidence type="ECO:0000255" key="1">
    <source>
        <dbReference type="HAMAP-Rule" id="MF_00168"/>
    </source>
</evidence>
<feature type="chain" id="PRO_1000203654" description="Queuine tRNA-ribosyltransferase">
    <location>
        <begin position="1"/>
        <end position="378"/>
    </location>
</feature>
<feature type="region of interest" description="RNA binding" evidence="1">
    <location>
        <begin position="252"/>
        <end position="258"/>
    </location>
</feature>
<feature type="active site" description="Proton acceptor" evidence="1">
    <location>
        <position position="89"/>
    </location>
</feature>
<feature type="active site" description="Nucleophile" evidence="1">
    <location>
        <position position="271"/>
    </location>
</feature>
<feature type="binding site" evidence="1">
    <location>
        <begin position="89"/>
        <end position="93"/>
    </location>
    <ligand>
        <name>substrate</name>
    </ligand>
</feature>
<feature type="binding site" evidence="1">
    <location>
        <position position="143"/>
    </location>
    <ligand>
        <name>substrate</name>
    </ligand>
</feature>
<feature type="binding site" evidence="1">
    <location>
        <position position="194"/>
    </location>
    <ligand>
        <name>substrate</name>
    </ligand>
</feature>
<feature type="binding site" evidence="1">
    <location>
        <position position="221"/>
    </location>
    <ligand>
        <name>substrate</name>
    </ligand>
</feature>
<feature type="binding site" evidence="1">
    <location>
        <position position="309"/>
    </location>
    <ligand>
        <name>Zn(2+)</name>
        <dbReference type="ChEBI" id="CHEBI:29105"/>
    </ligand>
</feature>
<feature type="binding site" evidence="1">
    <location>
        <position position="311"/>
    </location>
    <ligand>
        <name>Zn(2+)</name>
        <dbReference type="ChEBI" id="CHEBI:29105"/>
    </ligand>
</feature>
<feature type="binding site" evidence="1">
    <location>
        <position position="314"/>
    </location>
    <ligand>
        <name>Zn(2+)</name>
        <dbReference type="ChEBI" id="CHEBI:29105"/>
    </ligand>
</feature>
<feature type="binding site" evidence="1">
    <location>
        <position position="340"/>
    </location>
    <ligand>
        <name>Zn(2+)</name>
        <dbReference type="ChEBI" id="CHEBI:29105"/>
    </ligand>
</feature>
<comment type="function">
    <text evidence="1">Catalyzes the base-exchange of a guanine (G) residue with the queuine precursor 7-aminomethyl-7-deazaguanine (PreQ1) at position 34 (anticodon wobble position) in tRNAs with GU(N) anticodons (tRNA-Asp, -Asn, -His and -Tyr). Catalysis occurs through a double-displacement mechanism. The nucleophile active site attacks the C1' of nucleotide 34 to detach the guanine base from the RNA, forming a covalent enzyme-RNA intermediate. The proton acceptor active site deprotonates the incoming PreQ1, allowing a nucleophilic attack on the C1' of the ribose to form the product. After dissociation, two additional enzymatic reactions on the tRNA convert PreQ1 to queuine (Q), resulting in the hypermodified nucleoside queuosine (7-(((4,5-cis-dihydroxy-2-cyclopenten-1-yl)amino)methyl)-7-deazaguanosine).</text>
</comment>
<comment type="catalytic activity">
    <reaction evidence="1">
        <text>7-aminomethyl-7-carbaguanine + guanosine(34) in tRNA = 7-aminomethyl-7-carbaguanosine(34) in tRNA + guanine</text>
        <dbReference type="Rhea" id="RHEA:24104"/>
        <dbReference type="Rhea" id="RHEA-COMP:10341"/>
        <dbReference type="Rhea" id="RHEA-COMP:10342"/>
        <dbReference type="ChEBI" id="CHEBI:16235"/>
        <dbReference type="ChEBI" id="CHEBI:58703"/>
        <dbReference type="ChEBI" id="CHEBI:74269"/>
        <dbReference type="ChEBI" id="CHEBI:82833"/>
        <dbReference type="EC" id="2.4.2.29"/>
    </reaction>
</comment>
<comment type="cofactor">
    <cofactor evidence="1">
        <name>Zn(2+)</name>
        <dbReference type="ChEBI" id="CHEBI:29105"/>
    </cofactor>
    <text evidence="1">Binds 1 zinc ion per subunit.</text>
</comment>
<comment type="pathway">
    <text evidence="1">tRNA modification; tRNA-queuosine biosynthesis.</text>
</comment>
<comment type="subunit">
    <text evidence="1">Homodimer. Within each dimer, one monomer is responsible for RNA recognition and catalysis, while the other monomer binds to the replacement base PreQ1.</text>
</comment>
<comment type="similarity">
    <text evidence="1">Belongs to the queuine tRNA-ribosyltransferase family.</text>
</comment>
<gene>
    <name evidence="1" type="primary">tgt</name>
    <name type="ordered locus">EUBELI_00759</name>
</gene>
<name>TGT_LACE2</name>
<protein>
    <recommendedName>
        <fullName evidence="1">Queuine tRNA-ribosyltransferase</fullName>
        <ecNumber evidence="1">2.4.2.29</ecNumber>
    </recommendedName>
    <alternativeName>
        <fullName evidence="1">Guanine insertion enzyme</fullName>
    </alternativeName>
    <alternativeName>
        <fullName evidence="1">tRNA-guanine transglycosylase</fullName>
    </alternativeName>
</protein>
<organism>
    <name type="scientific">Lachnospira eligens (strain ATCC 27750 / DSM 3376 / VPI C15-48 / C15-B4)</name>
    <name type="common">Eubacterium eligens</name>
    <dbReference type="NCBI Taxonomy" id="515620"/>
    <lineage>
        <taxon>Bacteria</taxon>
        <taxon>Bacillati</taxon>
        <taxon>Bacillota</taxon>
        <taxon>Clostridia</taxon>
        <taxon>Lachnospirales</taxon>
        <taxon>Lachnospiraceae</taxon>
        <taxon>Lachnospira</taxon>
    </lineage>
</organism>
<sequence length="378" mass="42663">MYKILKTDGRAKRAEFTTVHGTVQTPVFMNVGTVAAIKGAVATTDLQQIGTQIELSNTYHLHVRPGDKIIKQLGGLHKFMNWDKPILTDSGGFQVFSLAGLRKIKEEGVTFQSHIDGHKIFMGPEESMQIQSNLGSTIAMAFDECAPAKADRKYIQNSVDRTYRWLERCKKEMARLNSLPDTVNPDQMLFGIDQGGVFNDIRIDHAKRISELDLDGYAVGGLAVGETHEEMYDVLDNVVPYLPQDKPTYLMGVGTPANILESVDRGIDFFDCVYPSRNGRHGHVYTKFGKINLFNAKYETDTAPIEEGCGCPCCQNYSRAYVRHLLKAKEMLGMRLCVLHNLYYYNHLMTDIRAAIEEGRYAGFKEEALYQMKTYDKQ</sequence>
<accession>C4Z563</accession>
<dbReference type="EC" id="2.4.2.29" evidence="1"/>
<dbReference type="EMBL" id="CP001104">
    <property type="protein sequence ID" value="ACR71767.1"/>
    <property type="molecule type" value="Genomic_DNA"/>
</dbReference>
<dbReference type="RefSeq" id="WP_012739003.1">
    <property type="nucleotide sequence ID" value="NC_012778.1"/>
</dbReference>
<dbReference type="SMR" id="C4Z563"/>
<dbReference type="STRING" id="515620.EUBELI_00759"/>
<dbReference type="GeneID" id="41355500"/>
<dbReference type="KEGG" id="eel:EUBELI_00759"/>
<dbReference type="eggNOG" id="COG0343">
    <property type="taxonomic scope" value="Bacteria"/>
</dbReference>
<dbReference type="HOGENOM" id="CLU_022060_0_1_9"/>
<dbReference type="UniPathway" id="UPA00392"/>
<dbReference type="Proteomes" id="UP000001476">
    <property type="component" value="Chromosome"/>
</dbReference>
<dbReference type="GO" id="GO:0005829">
    <property type="term" value="C:cytosol"/>
    <property type="evidence" value="ECO:0007669"/>
    <property type="project" value="TreeGrafter"/>
</dbReference>
<dbReference type="GO" id="GO:0046872">
    <property type="term" value="F:metal ion binding"/>
    <property type="evidence" value="ECO:0007669"/>
    <property type="project" value="UniProtKB-KW"/>
</dbReference>
<dbReference type="GO" id="GO:0008479">
    <property type="term" value="F:tRNA-guanosine(34) queuine transglycosylase activity"/>
    <property type="evidence" value="ECO:0007669"/>
    <property type="project" value="UniProtKB-UniRule"/>
</dbReference>
<dbReference type="GO" id="GO:0008616">
    <property type="term" value="P:queuosine biosynthetic process"/>
    <property type="evidence" value="ECO:0007669"/>
    <property type="project" value="UniProtKB-UniRule"/>
</dbReference>
<dbReference type="GO" id="GO:0002099">
    <property type="term" value="P:tRNA wobble guanine modification"/>
    <property type="evidence" value="ECO:0007669"/>
    <property type="project" value="TreeGrafter"/>
</dbReference>
<dbReference type="GO" id="GO:0101030">
    <property type="term" value="P:tRNA-guanine transglycosylation"/>
    <property type="evidence" value="ECO:0007669"/>
    <property type="project" value="InterPro"/>
</dbReference>
<dbReference type="FunFam" id="3.20.20.105:FF:000001">
    <property type="entry name" value="Queuine tRNA-ribosyltransferase"/>
    <property type="match status" value="1"/>
</dbReference>
<dbReference type="Gene3D" id="3.20.20.105">
    <property type="entry name" value="Queuine tRNA-ribosyltransferase-like"/>
    <property type="match status" value="1"/>
</dbReference>
<dbReference type="HAMAP" id="MF_00168">
    <property type="entry name" value="Q_tRNA_Tgt"/>
    <property type="match status" value="1"/>
</dbReference>
<dbReference type="InterPro" id="IPR050076">
    <property type="entry name" value="ArchSynthase1/Queuine_TRR"/>
</dbReference>
<dbReference type="InterPro" id="IPR004803">
    <property type="entry name" value="TGT"/>
</dbReference>
<dbReference type="InterPro" id="IPR036511">
    <property type="entry name" value="TGT-like_sf"/>
</dbReference>
<dbReference type="InterPro" id="IPR002616">
    <property type="entry name" value="tRNA_ribo_trans-like"/>
</dbReference>
<dbReference type="NCBIfam" id="TIGR00430">
    <property type="entry name" value="Q_tRNA_tgt"/>
    <property type="match status" value="1"/>
</dbReference>
<dbReference type="NCBIfam" id="TIGR00449">
    <property type="entry name" value="tgt_general"/>
    <property type="match status" value="1"/>
</dbReference>
<dbReference type="PANTHER" id="PTHR46499">
    <property type="entry name" value="QUEUINE TRNA-RIBOSYLTRANSFERASE"/>
    <property type="match status" value="1"/>
</dbReference>
<dbReference type="PANTHER" id="PTHR46499:SF1">
    <property type="entry name" value="QUEUINE TRNA-RIBOSYLTRANSFERASE"/>
    <property type="match status" value="1"/>
</dbReference>
<dbReference type="Pfam" id="PF01702">
    <property type="entry name" value="TGT"/>
    <property type="match status" value="1"/>
</dbReference>
<dbReference type="SUPFAM" id="SSF51713">
    <property type="entry name" value="tRNA-guanine transglycosylase"/>
    <property type="match status" value="1"/>
</dbReference>
<keyword id="KW-0328">Glycosyltransferase</keyword>
<keyword id="KW-0479">Metal-binding</keyword>
<keyword id="KW-0671">Queuosine biosynthesis</keyword>
<keyword id="KW-1185">Reference proteome</keyword>
<keyword id="KW-0808">Transferase</keyword>
<keyword id="KW-0819">tRNA processing</keyword>
<keyword id="KW-0862">Zinc</keyword>
<proteinExistence type="inferred from homology"/>